<reference key="1">
    <citation type="journal article" date="2003" name="Proc. Natl. Acad. Sci. U.S.A.">
        <title>The complete genome sequence of the Arabidopsis and tomato pathogen Pseudomonas syringae pv. tomato DC3000.</title>
        <authorList>
            <person name="Buell C.R."/>
            <person name="Joardar V."/>
            <person name="Lindeberg M."/>
            <person name="Selengut J."/>
            <person name="Paulsen I.T."/>
            <person name="Gwinn M.L."/>
            <person name="Dodson R.J."/>
            <person name="DeBoy R.T."/>
            <person name="Durkin A.S."/>
            <person name="Kolonay J.F."/>
            <person name="Madupu R."/>
            <person name="Daugherty S.C."/>
            <person name="Brinkac L.M."/>
            <person name="Beanan M.J."/>
            <person name="Haft D.H."/>
            <person name="Nelson W.C."/>
            <person name="Davidsen T.M."/>
            <person name="Zafar N."/>
            <person name="Zhou L."/>
            <person name="Liu J."/>
            <person name="Yuan Q."/>
            <person name="Khouri H.M."/>
            <person name="Fedorova N.B."/>
            <person name="Tran B."/>
            <person name="Russell D."/>
            <person name="Berry K.J."/>
            <person name="Utterback T.R."/>
            <person name="Van Aken S.E."/>
            <person name="Feldblyum T.V."/>
            <person name="D'Ascenzo M."/>
            <person name="Deng W.-L."/>
            <person name="Ramos A.R."/>
            <person name="Alfano J.R."/>
            <person name="Cartinhour S."/>
            <person name="Chatterjee A.K."/>
            <person name="Delaney T.P."/>
            <person name="Lazarowitz S.G."/>
            <person name="Martin G.B."/>
            <person name="Schneider D.J."/>
            <person name="Tang X."/>
            <person name="Bender C.L."/>
            <person name="White O."/>
            <person name="Fraser C.M."/>
            <person name="Collmer A."/>
        </authorList>
    </citation>
    <scope>NUCLEOTIDE SEQUENCE [LARGE SCALE GENOMIC DNA]</scope>
    <source>
        <strain>ATCC BAA-871 / DC3000</strain>
    </source>
</reference>
<accession>Q87XN2</accession>
<proteinExistence type="inferred from homology"/>
<gene>
    <name evidence="1" type="primary">dcd</name>
    <name type="ordered locus">PSPTO_4144</name>
</gene>
<keyword id="KW-0378">Hydrolase</keyword>
<keyword id="KW-0546">Nucleotide metabolism</keyword>
<keyword id="KW-0547">Nucleotide-binding</keyword>
<keyword id="KW-1185">Reference proteome</keyword>
<comment type="function">
    <text evidence="1">Catalyzes the deamination of dCTP to dUTP.</text>
</comment>
<comment type="catalytic activity">
    <reaction evidence="1">
        <text>dCTP + H2O + H(+) = dUTP + NH4(+)</text>
        <dbReference type="Rhea" id="RHEA:22680"/>
        <dbReference type="ChEBI" id="CHEBI:15377"/>
        <dbReference type="ChEBI" id="CHEBI:15378"/>
        <dbReference type="ChEBI" id="CHEBI:28938"/>
        <dbReference type="ChEBI" id="CHEBI:61481"/>
        <dbReference type="ChEBI" id="CHEBI:61555"/>
        <dbReference type="EC" id="3.5.4.13"/>
    </reaction>
</comment>
<comment type="pathway">
    <text evidence="1">Pyrimidine metabolism; dUMP biosynthesis; dUMP from dCTP (dUTP route): step 1/2.</text>
</comment>
<comment type="subunit">
    <text evidence="1">Homotrimer.</text>
</comment>
<comment type="similarity">
    <text evidence="1">Belongs to the dCTP deaminase family.</text>
</comment>
<evidence type="ECO:0000255" key="1">
    <source>
        <dbReference type="HAMAP-Rule" id="MF_00146"/>
    </source>
</evidence>
<dbReference type="EC" id="3.5.4.13" evidence="1"/>
<dbReference type="EMBL" id="AE016853">
    <property type="protein sequence ID" value="AAO57600.1"/>
    <property type="molecule type" value="Genomic_DNA"/>
</dbReference>
<dbReference type="RefSeq" id="NP_793905.1">
    <property type="nucleotide sequence ID" value="NC_004578.1"/>
</dbReference>
<dbReference type="RefSeq" id="WP_003381535.1">
    <property type="nucleotide sequence ID" value="NC_004578.1"/>
</dbReference>
<dbReference type="SMR" id="Q87XN2"/>
<dbReference type="STRING" id="223283.PSPTO_4144"/>
<dbReference type="GeneID" id="61791187"/>
<dbReference type="KEGG" id="pst:PSPTO_4144"/>
<dbReference type="PATRIC" id="fig|223283.9.peg.4254"/>
<dbReference type="eggNOG" id="COG0717">
    <property type="taxonomic scope" value="Bacteria"/>
</dbReference>
<dbReference type="HOGENOM" id="CLU_087476_4_0_6"/>
<dbReference type="OrthoDB" id="9780956at2"/>
<dbReference type="PhylomeDB" id="Q87XN2"/>
<dbReference type="UniPathway" id="UPA00610">
    <property type="reaction ID" value="UER00665"/>
</dbReference>
<dbReference type="Proteomes" id="UP000002515">
    <property type="component" value="Chromosome"/>
</dbReference>
<dbReference type="GO" id="GO:0008829">
    <property type="term" value="F:dCTP deaminase activity"/>
    <property type="evidence" value="ECO:0007669"/>
    <property type="project" value="UniProtKB-UniRule"/>
</dbReference>
<dbReference type="GO" id="GO:0000166">
    <property type="term" value="F:nucleotide binding"/>
    <property type="evidence" value="ECO:0007669"/>
    <property type="project" value="UniProtKB-KW"/>
</dbReference>
<dbReference type="GO" id="GO:0006226">
    <property type="term" value="P:dUMP biosynthetic process"/>
    <property type="evidence" value="ECO:0007669"/>
    <property type="project" value="UniProtKB-UniPathway"/>
</dbReference>
<dbReference type="GO" id="GO:0006229">
    <property type="term" value="P:dUTP biosynthetic process"/>
    <property type="evidence" value="ECO:0007669"/>
    <property type="project" value="UniProtKB-UniRule"/>
</dbReference>
<dbReference type="GO" id="GO:0015949">
    <property type="term" value="P:nucleobase-containing small molecule interconversion"/>
    <property type="evidence" value="ECO:0007669"/>
    <property type="project" value="TreeGrafter"/>
</dbReference>
<dbReference type="CDD" id="cd07557">
    <property type="entry name" value="trimeric_dUTPase"/>
    <property type="match status" value="1"/>
</dbReference>
<dbReference type="FunFam" id="2.70.40.10:FF:000001">
    <property type="entry name" value="dCTP deaminase"/>
    <property type="match status" value="1"/>
</dbReference>
<dbReference type="Gene3D" id="2.70.40.10">
    <property type="match status" value="1"/>
</dbReference>
<dbReference type="HAMAP" id="MF_00146">
    <property type="entry name" value="dCTP_deaminase"/>
    <property type="match status" value="1"/>
</dbReference>
<dbReference type="InterPro" id="IPR011962">
    <property type="entry name" value="dCTP_deaminase"/>
</dbReference>
<dbReference type="InterPro" id="IPR036157">
    <property type="entry name" value="dUTPase-like_sf"/>
</dbReference>
<dbReference type="InterPro" id="IPR033704">
    <property type="entry name" value="dUTPase_trimeric"/>
</dbReference>
<dbReference type="NCBIfam" id="TIGR02274">
    <property type="entry name" value="dCTP_deam"/>
    <property type="match status" value="1"/>
</dbReference>
<dbReference type="PANTHER" id="PTHR42680">
    <property type="entry name" value="DCTP DEAMINASE"/>
    <property type="match status" value="1"/>
</dbReference>
<dbReference type="PANTHER" id="PTHR42680:SF3">
    <property type="entry name" value="DCTP DEAMINASE"/>
    <property type="match status" value="1"/>
</dbReference>
<dbReference type="Pfam" id="PF22769">
    <property type="entry name" value="DCD"/>
    <property type="match status" value="1"/>
</dbReference>
<dbReference type="SUPFAM" id="SSF51283">
    <property type="entry name" value="dUTPase-like"/>
    <property type="match status" value="1"/>
</dbReference>
<organism>
    <name type="scientific">Pseudomonas syringae pv. tomato (strain ATCC BAA-871 / DC3000)</name>
    <dbReference type="NCBI Taxonomy" id="223283"/>
    <lineage>
        <taxon>Bacteria</taxon>
        <taxon>Pseudomonadati</taxon>
        <taxon>Pseudomonadota</taxon>
        <taxon>Gammaproteobacteria</taxon>
        <taxon>Pseudomonadales</taxon>
        <taxon>Pseudomonadaceae</taxon>
        <taxon>Pseudomonas</taxon>
    </lineage>
</organism>
<sequence>MSIKSDKWIRRMAQEHGMIEPFVERQVRGEGANRVISFGVSSYGYDVRCADEFKVFTNINSATVDPKNFDEKSFVDIKSDVCIIPPNSFALARTVEYFRIPRNVLTICLGKSTYARCGIIVNVTPLEPEWEGHVTLEFSNTTTLPAKIYANEGVAQMLFLESDEECEVSYKDRGGKYQGQRGVTLPRT</sequence>
<name>DCD_PSESM</name>
<feature type="chain" id="PRO_0000156005" description="dCTP deaminase">
    <location>
        <begin position="1"/>
        <end position="188"/>
    </location>
</feature>
<feature type="active site" description="Proton donor/acceptor" evidence="1">
    <location>
        <position position="137"/>
    </location>
</feature>
<feature type="binding site" evidence="1">
    <location>
        <begin position="111"/>
        <end position="116"/>
    </location>
    <ligand>
        <name>dCTP</name>
        <dbReference type="ChEBI" id="CHEBI:61481"/>
    </ligand>
</feature>
<feature type="binding site" evidence="1">
    <location>
        <begin position="135"/>
        <end position="137"/>
    </location>
    <ligand>
        <name>dCTP</name>
        <dbReference type="ChEBI" id="CHEBI:61481"/>
    </ligand>
</feature>
<feature type="binding site" evidence="1">
    <location>
        <position position="156"/>
    </location>
    <ligand>
        <name>dCTP</name>
        <dbReference type="ChEBI" id="CHEBI:61481"/>
    </ligand>
</feature>
<feature type="binding site" evidence="1">
    <location>
        <position position="170"/>
    </location>
    <ligand>
        <name>dCTP</name>
        <dbReference type="ChEBI" id="CHEBI:61481"/>
    </ligand>
</feature>
<feature type="binding site" evidence="1">
    <location>
        <position position="180"/>
    </location>
    <ligand>
        <name>dCTP</name>
        <dbReference type="ChEBI" id="CHEBI:61481"/>
    </ligand>
</feature>
<protein>
    <recommendedName>
        <fullName evidence="1">dCTP deaminase</fullName>
        <ecNumber evidence="1">3.5.4.13</ecNumber>
    </recommendedName>
    <alternativeName>
        <fullName evidence="1">Deoxycytidine triphosphate deaminase</fullName>
    </alternativeName>
</protein>